<name>HIS8_LACLM</name>
<reference key="1">
    <citation type="journal article" date="2007" name="J. Bacteriol.">
        <title>The complete genome sequence of the lactic acid bacterial paradigm Lactococcus lactis subsp. cremoris MG1363.</title>
        <authorList>
            <person name="Wegmann U."/>
            <person name="O'Connell-Motherway M."/>
            <person name="Zomer A."/>
            <person name="Buist G."/>
            <person name="Shearman C."/>
            <person name="Canchaya C."/>
            <person name="Ventura M."/>
            <person name="Goesmann A."/>
            <person name="Gasson M.J."/>
            <person name="Kuipers O.P."/>
            <person name="van Sinderen D."/>
            <person name="Kok J."/>
        </authorList>
    </citation>
    <scope>NUCLEOTIDE SEQUENCE [LARGE SCALE GENOMIC DNA]</scope>
    <source>
        <strain>MG1363</strain>
    </source>
</reference>
<protein>
    <recommendedName>
        <fullName evidence="1">Histidinol-phosphate aminotransferase</fullName>
        <ecNumber evidence="1">2.6.1.9</ecNumber>
    </recommendedName>
    <alternativeName>
        <fullName evidence="1">Imidazole acetol-phosphate transaminase</fullName>
    </alternativeName>
</protein>
<keyword id="KW-0028">Amino-acid biosynthesis</keyword>
<keyword id="KW-0032">Aminotransferase</keyword>
<keyword id="KW-0368">Histidine biosynthesis</keyword>
<keyword id="KW-0663">Pyridoxal phosphate</keyword>
<keyword id="KW-0808">Transferase</keyword>
<accession>A2RKS5</accession>
<dbReference type="EC" id="2.6.1.9" evidence="1"/>
<dbReference type="EMBL" id="AM406671">
    <property type="protein sequence ID" value="CAL97891.1"/>
    <property type="molecule type" value="Genomic_DNA"/>
</dbReference>
<dbReference type="RefSeq" id="WP_011835175.1">
    <property type="nucleotide sequence ID" value="NC_009004.1"/>
</dbReference>
<dbReference type="SMR" id="A2RKS5"/>
<dbReference type="STRING" id="416870.llmg_1298"/>
<dbReference type="KEGG" id="llm:llmg_1298"/>
<dbReference type="eggNOG" id="COG0079">
    <property type="taxonomic scope" value="Bacteria"/>
</dbReference>
<dbReference type="HOGENOM" id="CLU_017584_3_0_9"/>
<dbReference type="OrthoDB" id="9813612at2"/>
<dbReference type="PhylomeDB" id="A2RKS5"/>
<dbReference type="UniPathway" id="UPA00031">
    <property type="reaction ID" value="UER00012"/>
</dbReference>
<dbReference type="Proteomes" id="UP000000364">
    <property type="component" value="Chromosome"/>
</dbReference>
<dbReference type="GO" id="GO:0004400">
    <property type="term" value="F:histidinol-phosphate transaminase activity"/>
    <property type="evidence" value="ECO:0007669"/>
    <property type="project" value="UniProtKB-UniRule"/>
</dbReference>
<dbReference type="GO" id="GO:0030170">
    <property type="term" value="F:pyridoxal phosphate binding"/>
    <property type="evidence" value="ECO:0007669"/>
    <property type="project" value="InterPro"/>
</dbReference>
<dbReference type="GO" id="GO:0000105">
    <property type="term" value="P:L-histidine biosynthetic process"/>
    <property type="evidence" value="ECO:0007669"/>
    <property type="project" value="UniProtKB-UniRule"/>
</dbReference>
<dbReference type="CDD" id="cd00609">
    <property type="entry name" value="AAT_like"/>
    <property type="match status" value="1"/>
</dbReference>
<dbReference type="Gene3D" id="3.90.1150.10">
    <property type="entry name" value="Aspartate Aminotransferase, domain 1"/>
    <property type="match status" value="1"/>
</dbReference>
<dbReference type="Gene3D" id="3.40.640.10">
    <property type="entry name" value="Type I PLP-dependent aspartate aminotransferase-like (Major domain)"/>
    <property type="match status" value="1"/>
</dbReference>
<dbReference type="HAMAP" id="MF_01023">
    <property type="entry name" value="HisC_aminotrans_2"/>
    <property type="match status" value="1"/>
</dbReference>
<dbReference type="InterPro" id="IPR004839">
    <property type="entry name" value="Aminotransferase_I/II_large"/>
</dbReference>
<dbReference type="InterPro" id="IPR005861">
    <property type="entry name" value="HisP_aminotrans"/>
</dbReference>
<dbReference type="InterPro" id="IPR050106">
    <property type="entry name" value="HistidinolP_aminotransfase"/>
</dbReference>
<dbReference type="InterPro" id="IPR015424">
    <property type="entry name" value="PyrdxlP-dep_Trfase"/>
</dbReference>
<dbReference type="InterPro" id="IPR015421">
    <property type="entry name" value="PyrdxlP-dep_Trfase_major"/>
</dbReference>
<dbReference type="InterPro" id="IPR015422">
    <property type="entry name" value="PyrdxlP-dep_Trfase_small"/>
</dbReference>
<dbReference type="NCBIfam" id="TIGR01141">
    <property type="entry name" value="hisC"/>
    <property type="match status" value="1"/>
</dbReference>
<dbReference type="PANTHER" id="PTHR43643:SF3">
    <property type="entry name" value="HISTIDINOL-PHOSPHATE AMINOTRANSFERASE"/>
    <property type="match status" value="1"/>
</dbReference>
<dbReference type="PANTHER" id="PTHR43643">
    <property type="entry name" value="HISTIDINOL-PHOSPHATE AMINOTRANSFERASE 2"/>
    <property type="match status" value="1"/>
</dbReference>
<dbReference type="Pfam" id="PF00155">
    <property type="entry name" value="Aminotran_1_2"/>
    <property type="match status" value="1"/>
</dbReference>
<dbReference type="SUPFAM" id="SSF53383">
    <property type="entry name" value="PLP-dependent transferases"/>
    <property type="match status" value="1"/>
</dbReference>
<feature type="chain" id="PRO_0000319766" description="Histidinol-phosphate aminotransferase">
    <location>
        <begin position="1"/>
        <end position="356"/>
    </location>
</feature>
<feature type="modified residue" description="N6-(pyridoxal phosphate)lysine" evidence="1">
    <location>
        <position position="208"/>
    </location>
</feature>
<organism>
    <name type="scientific">Lactococcus lactis subsp. cremoris (strain MG1363)</name>
    <dbReference type="NCBI Taxonomy" id="416870"/>
    <lineage>
        <taxon>Bacteria</taxon>
        <taxon>Bacillati</taxon>
        <taxon>Bacillota</taxon>
        <taxon>Bacilli</taxon>
        <taxon>Lactobacillales</taxon>
        <taxon>Streptococcaceae</taxon>
        <taxon>Lactococcus</taxon>
        <taxon>Lactococcus cremoris subsp. cremoris</taxon>
    </lineage>
</organism>
<comment type="catalytic activity">
    <reaction evidence="1">
        <text>L-histidinol phosphate + 2-oxoglutarate = 3-(imidazol-4-yl)-2-oxopropyl phosphate + L-glutamate</text>
        <dbReference type="Rhea" id="RHEA:23744"/>
        <dbReference type="ChEBI" id="CHEBI:16810"/>
        <dbReference type="ChEBI" id="CHEBI:29985"/>
        <dbReference type="ChEBI" id="CHEBI:57766"/>
        <dbReference type="ChEBI" id="CHEBI:57980"/>
        <dbReference type="EC" id="2.6.1.9"/>
    </reaction>
</comment>
<comment type="cofactor">
    <cofactor evidence="1">
        <name>pyridoxal 5'-phosphate</name>
        <dbReference type="ChEBI" id="CHEBI:597326"/>
    </cofactor>
</comment>
<comment type="pathway">
    <text evidence="1">Amino-acid biosynthesis; L-histidine biosynthesis; L-histidine from 5-phospho-alpha-D-ribose 1-diphosphate: step 7/9.</text>
</comment>
<comment type="subunit">
    <text evidence="1">Homodimer.</text>
</comment>
<comment type="similarity">
    <text evidence="1">Belongs to the class-II pyridoxal-phosphate-dependent aminotransferase family. Histidinol-phosphate aminotransferase subfamily.</text>
</comment>
<proteinExistence type="inferred from homology"/>
<sequence>MSWQNNLRSVSPYIAGEQAELTDMIKLNTNENPYPPSLQVQKVIEDFKSDNLRLYPSTDAKVLRKALATYHHLNTDQVFIGNGSDEVLSLSFLTFFNSEKPLLMPDISYSFYPIYCGLYHIPYQKIPLADDFSLSVNSYFQENGGIVIANPNAPTGMAISLQEIEEILQNNQDSIVLIDEAYIDFGGESCLPLLEKFDNLVVVQTFFKSRSLAGIRLGVAFGSAEAIAHLYDMKNSFNSYPIDSLAQKIGEASLNDETYFQKSVSKIITTRENFKKELIKLGFQVTDSKTNFVFVHHPKVDATTLFKALYEAKIIVRHWNQARISDWLRITIGTDREMNTVIQFLKEYLKNKEKSY</sequence>
<evidence type="ECO:0000255" key="1">
    <source>
        <dbReference type="HAMAP-Rule" id="MF_01023"/>
    </source>
</evidence>
<gene>
    <name evidence="1" type="primary">hisC</name>
    <name type="ordered locus">llmg_1298</name>
</gene>